<name>ATP9_MALDO</name>
<geneLocation type="mitochondrion"/>
<feature type="chain" id="PRO_0000112215" description="ATP synthase subunit 9, mitochondrial">
    <location>
        <begin position="1"/>
        <end position="82"/>
    </location>
</feature>
<feature type="transmembrane region" description="Helical" evidence="1">
    <location>
        <begin position="8"/>
        <end position="28"/>
    </location>
</feature>
<feature type="transmembrane region" description="Helical" evidence="1">
    <location>
        <begin position="45"/>
        <end position="67"/>
    </location>
</feature>
<feature type="site" description="Reversibly protonated during proton transport" evidence="1">
    <location>
        <position position="57"/>
    </location>
</feature>
<sequence length="82" mass="8264">MLEGAKSIGAGAATIASAGAAIGIGNVFSSLIHSVARNPSLAKQSFGYAILGFALTEAIASFAPMMAFLISSVFRSVSRVTI</sequence>
<protein>
    <recommendedName>
        <fullName>ATP synthase subunit 9, mitochondrial</fullName>
    </recommendedName>
    <alternativeName>
        <fullName>Lipid-binding protein</fullName>
    </alternativeName>
</protein>
<accession>Q37550</accession>
<comment type="function">
    <text>This protein is one of the chains of the nonenzymatic membrane component (F0) of mitochondrial ATPase.</text>
</comment>
<comment type="subunit">
    <text evidence="1">F-type ATPases have 2 components, CF(1) - the catalytic core - and CF(0) - the membrane proton channel. CF(1) has five subunits: alpha(3), beta(3), gamma(1), delta(1), epsilon(1). CF(0) has three main subunits: a, b and c (By similarity).</text>
</comment>
<comment type="subcellular location">
    <subcellularLocation>
        <location evidence="2">Mitochondrion membrane</location>
        <topology evidence="2">Multi-pass membrane protein</topology>
    </subcellularLocation>
</comment>
<comment type="similarity">
    <text evidence="2">Belongs to the ATPase C chain family.</text>
</comment>
<gene>
    <name type="primary">ATP9</name>
</gene>
<evidence type="ECO:0000250" key="1"/>
<evidence type="ECO:0000305" key="2"/>
<reference key="1">
    <citation type="journal article" date="1995" name="Physiol. Plantarum">
        <title>The apple mitochondrial atp9 gene: RNA editing and co-transcription with exons a and b of the nad5 gene.</title>
        <authorList>
            <person name="Kato S."/>
            <person name="Shimamoto Y."/>
            <person name="Mikami T."/>
        </authorList>
    </citation>
    <scope>NUCLEOTIDE SEQUENCE [GENOMIC DNA]</scope>
    <source>
        <strain>cv. Delicious</strain>
    </source>
</reference>
<keyword id="KW-0067">ATP-binding</keyword>
<keyword id="KW-0138">CF(0)</keyword>
<keyword id="KW-0375">Hydrogen ion transport</keyword>
<keyword id="KW-0406">Ion transport</keyword>
<keyword id="KW-0446">Lipid-binding</keyword>
<keyword id="KW-0472">Membrane</keyword>
<keyword id="KW-0496">Mitochondrion</keyword>
<keyword id="KW-0547">Nucleotide-binding</keyword>
<keyword id="KW-0812">Transmembrane</keyword>
<keyword id="KW-1133">Transmembrane helix</keyword>
<keyword id="KW-0813">Transport</keyword>
<dbReference type="EMBL" id="D37958">
    <property type="protein sequence ID" value="BAA07175.1"/>
    <property type="molecule type" value="Genomic_DNA"/>
</dbReference>
<dbReference type="PIR" id="T17021">
    <property type="entry name" value="T17021"/>
</dbReference>
<dbReference type="SMR" id="Q37550"/>
<dbReference type="GO" id="GO:0031966">
    <property type="term" value="C:mitochondrial membrane"/>
    <property type="evidence" value="ECO:0007669"/>
    <property type="project" value="UniProtKB-SubCell"/>
</dbReference>
<dbReference type="GO" id="GO:0045259">
    <property type="term" value="C:proton-transporting ATP synthase complex"/>
    <property type="evidence" value="ECO:0007669"/>
    <property type="project" value="UniProtKB-KW"/>
</dbReference>
<dbReference type="GO" id="GO:0033177">
    <property type="term" value="C:proton-transporting two-sector ATPase complex, proton-transporting domain"/>
    <property type="evidence" value="ECO:0007669"/>
    <property type="project" value="InterPro"/>
</dbReference>
<dbReference type="GO" id="GO:0005524">
    <property type="term" value="F:ATP binding"/>
    <property type="evidence" value="ECO:0007669"/>
    <property type="project" value="UniProtKB-KW"/>
</dbReference>
<dbReference type="GO" id="GO:0008289">
    <property type="term" value="F:lipid binding"/>
    <property type="evidence" value="ECO:0007669"/>
    <property type="project" value="UniProtKB-KW"/>
</dbReference>
<dbReference type="GO" id="GO:0015078">
    <property type="term" value="F:proton transmembrane transporter activity"/>
    <property type="evidence" value="ECO:0007669"/>
    <property type="project" value="InterPro"/>
</dbReference>
<dbReference type="GO" id="GO:0015986">
    <property type="term" value="P:proton motive force-driven ATP synthesis"/>
    <property type="evidence" value="ECO:0007669"/>
    <property type="project" value="InterPro"/>
</dbReference>
<dbReference type="CDD" id="cd18182">
    <property type="entry name" value="ATP-synt_Fo_c_ATP5G3"/>
    <property type="match status" value="1"/>
</dbReference>
<dbReference type="FunFam" id="1.20.20.10:FF:000005">
    <property type="entry name" value="ATP synthase subunit 9, mitochondrial"/>
    <property type="match status" value="1"/>
</dbReference>
<dbReference type="Gene3D" id="1.20.20.10">
    <property type="entry name" value="F1F0 ATP synthase subunit C"/>
    <property type="match status" value="1"/>
</dbReference>
<dbReference type="HAMAP" id="MF_01396">
    <property type="entry name" value="ATP_synth_c_bact"/>
    <property type="match status" value="1"/>
</dbReference>
<dbReference type="InterPro" id="IPR000454">
    <property type="entry name" value="ATP_synth_F0_csu"/>
</dbReference>
<dbReference type="InterPro" id="IPR020537">
    <property type="entry name" value="ATP_synth_F0_csu_DDCD_BS"/>
</dbReference>
<dbReference type="InterPro" id="IPR038662">
    <property type="entry name" value="ATP_synth_F0_csu_sf"/>
</dbReference>
<dbReference type="InterPro" id="IPR002379">
    <property type="entry name" value="ATPase_proteolipid_c-like_dom"/>
</dbReference>
<dbReference type="InterPro" id="IPR035921">
    <property type="entry name" value="F/V-ATP_Csub_sf"/>
</dbReference>
<dbReference type="PANTHER" id="PTHR10031">
    <property type="entry name" value="ATP SYNTHASE LIPID-BINDING PROTEIN, MITOCHONDRIAL"/>
    <property type="match status" value="1"/>
</dbReference>
<dbReference type="PANTHER" id="PTHR10031:SF57">
    <property type="entry name" value="ATP SYNTHASE SUBUNIT 9, MITOCHONDRIAL"/>
    <property type="match status" value="1"/>
</dbReference>
<dbReference type="Pfam" id="PF00137">
    <property type="entry name" value="ATP-synt_C"/>
    <property type="match status" value="1"/>
</dbReference>
<dbReference type="PRINTS" id="PR00124">
    <property type="entry name" value="ATPASEC"/>
</dbReference>
<dbReference type="SUPFAM" id="SSF81333">
    <property type="entry name" value="F1F0 ATP synthase subunit C"/>
    <property type="match status" value="1"/>
</dbReference>
<dbReference type="PROSITE" id="PS00605">
    <property type="entry name" value="ATPASE_C"/>
    <property type="match status" value="1"/>
</dbReference>
<proteinExistence type="inferred from homology"/>
<organism>
    <name type="scientific">Malus domestica</name>
    <name type="common">Apple</name>
    <name type="synonym">Pyrus malus</name>
    <dbReference type="NCBI Taxonomy" id="3750"/>
    <lineage>
        <taxon>Eukaryota</taxon>
        <taxon>Viridiplantae</taxon>
        <taxon>Streptophyta</taxon>
        <taxon>Embryophyta</taxon>
        <taxon>Tracheophyta</taxon>
        <taxon>Spermatophyta</taxon>
        <taxon>Magnoliopsida</taxon>
        <taxon>eudicotyledons</taxon>
        <taxon>Gunneridae</taxon>
        <taxon>Pentapetalae</taxon>
        <taxon>rosids</taxon>
        <taxon>fabids</taxon>
        <taxon>Rosales</taxon>
        <taxon>Rosaceae</taxon>
        <taxon>Amygdaloideae</taxon>
        <taxon>Maleae</taxon>
        <taxon>Malus</taxon>
    </lineage>
</organism>